<protein>
    <recommendedName>
        <fullName evidence="1">3-dehydroquinate dehydratase</fullName>
        <shortName evidence="1">3-dehydroquinase</shortName>
        <ecNumber evidence="1">4.2.1.10</ecNumber>
    </recommendedName>
    <alternativeName>
        <fullName evidence="1">Type I DHQase</fullName>
    </alternativeName>
    <alternativeName>
        <fullName evidence="1">Type I dehydroquinase</fullName>
        <shortName evidence="1">DHQ1</shortName>
    </alternativeName>
</protein>
<keyword id="KW-0028">Amino-acid biosynthesis</keyword>
<keyword id="KW-0057">Aromatic amino acid biosynthesis</keyword>
<keyword id="KW-0456">Lyase</keyword>
<keyword id="KW-1185">Reference proteome</keyword>
<keyword id="KW-0704">Schiff base</keyword>
<proteinExistence type="inferred from homology"/>
<organism>
    <name type="scientific">Methanocaldococcus jannaschii (strain ATCC 43067 / DSM 2661 / JAL-1 / JCM 10045 / NBRC 100440)</name>
    <name type="common">Methanococcus jannaschii</name>
    <dbReference type="NCBI Taxonomy" id="243232"/>
    <lineage>
        <taxon>Archaea</taxon>
        <taxon>Methanobacteriati</taxon>
        <taxon>Methanobacteriota</taxon>
        <taxon>Methanomada group</taxon>
        <taxon>Methanococci</taxon>
        <taxon>Methanococcales</taxon>
        <taxon>Methanocaldococcaceae</taxon>
        <taxon>Methanocaldococcus</taxon>
    </lineage>
</organism>
<reference key="1">
    <citation type="journal article" date="1996" name="Science">
        <title>Complete genome sequence of the methanogenic archaeon, Methanococcus jannaschii.</title>
        <authorList>
            <person name="Bult C.J."/>
            <person name="White O."/>
            <person name="Olsen G.J."/>
            <person name="Zhou L."/>
            <person name="Fleischmann R.D."/>
            <person name="Sutton G.G."/>
            <person name="Blake J.A."/>
            <person name="FitzGerald L.M."/>
            <person name="Clayton R.A."/>
            <person name="Gocayne J.D."/>
            <person name="Kerlavage A.R."/>
            <person name="Dougherty B.A."/>
            <person name="Tomb J.-F."/>
            <person name="Adams M.D."/>
            <person name="Reich C.I."/>
            <person name="Overbeek R."/>
            <person name="Kirkness E.F."/>
            <person name="Weinstock K.G."/>
            <person name="Merrick J.M."/>
            <person name="Glodek A."/>
            <person name="Scott J.L."/>
            <person name="Geoghagen N.S.M."/>
            <person name="Weidman J.F."/>
            <person name="Fuhrmann J.L."/>
            <person name="Nguyen D."/>
            <person name="Utterback T.R."/>
            <person name="Kelley J.M."/>
            <person name="Peterson J.D."/>
            <person name="Sadow P.W."/>
            <person name="Hanna M.C."/>
            <person name="Cotton M.D."/>
            <person name="Roberts K.M."/>
            <person name="Hurst M.A."/>
            <person name="Kaine B.P."/>
            <person name="Borodovsky M."/>
            <person name="Klenk H.-P."/>
            <person name="Fraser C.M."/>
            <person name="Smith H.O."/>
            <person name="Woese C.R."/>
            <person name="Venter J.C."/>
        </authorList>
    </citation>
    <scope>NUCLEOTIDE SEQUENCE [LARGE SCALE GENOMIC DNA]</scope>
    <source>
        <strain>ATCC 43067 / DSM 2661 / JAL-1 / JCM 10045 / NBRC 100440</strain>
    </source>
</reference>
<gene>
    <name evidence="1" type="primary">aroD</name>
    <name type="ordered locus">MJ1454</name>
</gene>
<evidence type="ECO:0000255" key="1">
    <source>
        <dbReference type="HAMAP-Rule" id="MF_00214"/>
    </source>
</evidence>
<feature type="chain" id="PRO_0000138829" description="3-dehydroquinate dehydratase">
    <location>
        <begin position="1"/>
        <end position="220"/>
    </location>
</feature>
<feature type="active site" description="Proton donor/acceptor" evidence="1">
    <location>
        <position position="116"/>
    </location>
</feature>
<feature type="active site" description="Schiff-base intermediate with substrate" evidence="1">
    <location>
        <position position="142"/>
    </location>
</feature>
<feature type="binding site" evidence="1">
    <location>
        <begin position="29"/>
        <end position="31"/>
    </location>
    <ligand>
        <name>3-dehydroquinate</name>
        <dbReference type="ChEBI" id="CHEBI:32364"/>
    </ligand>
</feature>
<feature type="binding site" evidence="1">
    <location>
        <position position="56"/>
    </location>
    <ligand>
        <name>3-dehydroquinate</name>
        <dbReference type="ChEBI" id="CHEBI:32364"/>
    </ligand>
</feature>
<feature type="binding site" evidence="1">
    <location>
        <position position="180"/>
    </location>
    <ligand>
        <name>3-dehydroquinate</name>
        <dbReference type="ChEBI" id="CHEBI:32364"/>
    </ligand>
</feature>
<feature type="binding site" evidence="1">
    <location>
        <position position="200"/>
    </location>
    <ligand>
        <name>3-dehydroquinate</name>
        <dbReference type="ChEBI" id="CHEBI:32364"/>
    </ligand>
</feature>
<feature type="binding site" evidence="1">
    <location>
        <position position="204"/>
    </location>
    <ligand>
        <name>3-dehydroquinate</name>
        <dbReference type="ChEBI" id="CHEBI:32364"/>
    </ligand>
</feature>
<accession>Q58849</accession>
<comment type="function">
    <text evidence="1">Involved in the third step of the chorismate pathway, which leads to the biosynthesis of aromatic amino acids. Catalyzes the cis-dehydration of 3-dehydroquinate (DHQ) and introduces the first double bond of the aromatic ring to yield 3-dehydroshikimate.</text>
</comment>
<comment type="catalytic activity">
    <reaction evidence="1">
        <text>3-dehydroquinate = 3-dehydroshikimate + H2O</text>
        <dbReference type="Rhea" id="RHEA:21096"/>
        <dbReference type="ChEBI" id="CHEBI:15377"/>
        <dbReference type="ChEBI" id="CHEBI:16630"/>
        <dbReference type="ChEBI" id="CHEBI:32364"/>
        <dbReference type="EC" id="4.2.1.10"/>
    </reaction>
</comment>
<comment type="pathway">
    <text evidence="1">Metabolic intermediate biosynthesis; chorismate biosynthesis; chorismate from D-erythrose 4-phosphate and phosphoenolpyruvate: step 3/7.</text>
</comment>
<comment type="subunit">
    <text evidence="1">Homodimer.</text>
</comment>
<comment type="similarity">
    <text evidence="1">Belongs to the type-I 3-dehydroquinase family.</text>
</comment>
<name>AROD_METJA</name>
<sequence>MICLPVVEDSVEKAIKTAEKYLEIADIVEFRIDMLKEVSEEDIEKFAKYPCIITVRADWEGGYWKGNNEERLNLIKKAIECNAKFVDIELREEKNKELVKFRDEIGSKTKIIISYHDFEKTPSKEKLVEIVEKALSIGDIAKFATMANSKEDVLNILEVINKYPGKIIGIGMGEKGKLTRILGVYFGSILTFASYKGKSSAPGQVDIDTLKEIWRLMDLK</sequence>
<dbReference type="EC" id="4.2.1.10" evidence="1"/>
<dbReference type="EMBL" id="L77117">
    <property type="protein sequence ID" value="AAB99464.1"/>
    <property type="molecule type" value="Genomic_DNA"/>
</dbReference>
<dbReference type="PIR" id="E64481">
    <property type="entry name" value="E64481"/>
</dbReference>
<dbReference type="RefSeq" id="WP_010870974.1">
    <property type="nucleotide sequence ID" value="NC_000909.1"/>
</dbReference>
<dbReference type="SMR" id="Q58849"/>
<dbReference type="FunCoup" id="Q58849">
    <property type="interactions" value="93"/>
</dbReference>
<dbReference type="STRING" id="243232.MJ_1454"/>
<dbReference type="PaxDb" id="243232-MJ_1454"/>
<dbReference type="EnsemblBacteria" id="AAB99464">
    <property type="protein sequence ID" value="AAB99464"/>
    <property type="gene ID" value="MJ_1454"/>
</dbReference>
<dbReference type="GeneID" id="1452358"/>
<dbReference type="KEGG" id="mja:MJ_1454"/>
<dbReference type="eggNOG" id="arCOG02097">
    <property type="taxonomic scope" value="Archaea"/>
</dbReference>
<dbReference type="HOGENOM" id="CLU_064444_2_1_2"/>
<dbReference type="InParanoid" id="Q58849"/>
<dbReference type="OrthoDB" id="34329at2157"/>
<dbReference type="PhylomeDB" id="Q58849"/>
<dbReference type="UniPathway" id="UPA00053">
    <property type="reaction ID" value="UER00086"/>
</dbReference>
<dbReference type="Proteomes" id="UP000000805">
    <property type="component" value="Chromosome"/>
</dbReference>
<dbReference type="GO" id="GO:0003855">
    <property type="term" value="F:3-dehydroquinate dehydratase activity"/>
    <property type="evidence" value="ECO:0000318"/>
    <property type="project" value="GO_Central"/>
</dbReference>
<dbReference type="GO" id="GO:0046279">
    <property type="term" value="P:3,4-dihydroxybenzoate biosynthetic process"/>
    <property type="evidence" value="ECO:0000318"/>
    <property type="project" value="GO_Central"/>
</dbReference>
<dbReference type="GO" id="GO:0008652">
    <property type="term" value="P:amino acid biosynthetic process"/>
    <property type="evidence" value="ECO:0007669"/>
    <property type="project" value="UniProtKB-KW"/>
</dbReference>
<dbReference type="GO" id="GO:0009073">
    <property type="term" value="P:aromatic amino acid family biosynthetic process"/>
    <property type="evidence" value="ECO:0007669"/>
    <property type="project" value="UniProtKB-KW"/>
</dbReference>
<dbReference type="GO" id="GO:0009423">
    <property type="term" value="P:chorismate biosynthetic process"/>
    <property type="evidence" value="ECO:0007669"/>
    <property type="project" value="UniProtKB-UniRule"/>
</dbReference>
<dbReference type="CDD" id="cd00502">
    <property type="entry name" value="DHQase_I"/>
    <property type="match status" value="1"/>
</dbReference>
<dbReference type="FunFam" id="3.20.20.70:FF:000290">
    <property type="entry name" value="3-dehydroquinate dehydratase"/>
    <property type="match status" value="1"/>
</dbReference>
<dbReference type="Gene3D" id="3.20.20.70">
    <property type="entry name" value="Aldolase class I"/>
    <property type="match status" value="1"/>
</dbReference>
<dbReference type="HAMAP" id="MF_00214">
    <property type="entry name" value="AroD"/>
    <property type="match status" value="1"/>
</dbReference>
<dbReference type="InterPro" id="IPR018508">
    <property type="entry name" value="3-dehydroquinate_DH_AS"/>
</dbReference>
<dbReference type="InterPro" id="IPR013785">
    <property type="entry name" value="Aldolase_TIM"/>
</dbReference>
<dbReference type="InterPro" id="IPR001381">
    <property type="entry name" value="DHquinase_I"/>
</dbReference>
<dbReference type="InterPro" id="IPR050146">
    <property type="entry name" value="Type-I_3-dehydroquinase"/>
</dbReference>
<dbReference type="NCBIfam" id="TIGR01093">
    <property type="entry name" value="aroD"/>
    <property type="match status" value="1"/>
</dbReference>
<dbReference type="PANTHER" id="PTHR43699">
    <property type="entry name" value="3-DEHYDROQUINATE DEHYDRATASE"/>
    <property type="match status" value="1"/>
</dbReference>
<dbReference type="PANTHER" id="PTHR43699:SF1">
    <property type="entry name" value="3-DEHYDROQUINATE DEHYDRATASE"/>
    <property type="match status" value="1"/>
</dbReference>
<dbReference type="Pfam" id="PF01487">
    <property type="entry name" value="DHquinase_I"/>
    <property type="match status" value="1"/>
</dbReference>
<dbReference type="SUPFAM" id="SSF51569">
    <property type="entry name" value="Aldolase"/>
    <property type="match status" value="1"/>
</dbReference>
<dbReference type="PROSITE" id="PS01028">
    <property type="entry name" value="DEHYDROQUINASE_I"/>
    <property type="match status" value="1"/>
</dbReference>